<evidence type="ECO:0000255" key="1">
    <source>
        <dbReference type="HAMAP-Rule" id="MF_00188"/>
    </source>
</evidence>
<feature type="chain" id="PRO_1000020938" description="Protease HtpX">
    <location>
        <begin position="1"/>
        <end position="287"/>
    </location>
</feature>
<feature type="transmembrane region" description="Helical" evidence="1">
    <location>
        <begin position="4"/>
        <end position="24"/>
    </location>
</feature>
<feature type="transmembrane region" description="Helical" evidence="1">
    <location>
        <begin position="33"/>
        <end position="53"/>
    </location>
</feature>
<feature type="transmembrane region" description="Helical" evidence="1">
    <location>
        <begin position="154"/>
        <end position="174"/>
    </location>
</feature>
<feature type="transmembrane region" description="Helical" evidence="1">
    <location>
        <begin position="195"/>
        <end position="215"/>
    </location>
</feature>
<feature type="active site" evidence="1">
    <location>
        <position position="140"/>
    </location>
</feature>
<feature type="binding site" evidence="1">
    <location>
        <position position="139"/>
    </location>
    <ligand>
        <name>Zn(2+)</name>
        <dbReference type="ChEBI" id="CHEBI:29105"/>
        <note>catalytic</note>
    </ligand>
</feature>
<feature type="binding site" evidence="1">
    <location>
        <position position="143"/>
    </location>
    <ligand>
        <name>Zn(2+)</name>
        <dbReference type="ChEBI" id="CHEBI:29105"/>
        <note>catalytic</note>
    </ligand>
</feature>
<feature type="binding site" evidence="1">
    <location>
        <position position="220"/>
    </location>
    <ligand>
        <name>Zn(2+)</name>
        <dbReference type="ChEBI" id="CHEBI:29105"/>
        <note>catalytic</note>
    </ligand>
</feature>
<dbReference type="EC" id="3.4.24.-" evidence="1"/>
<dbReference type="EMBL" id="CP000469">
    <property type="protein sequence ID" value="ABK48741.1"/>
    <property type="molecule type" value="Genomic_DNA"/>
</dbReference>
<dbReference type="RefSeq" id="WP_011717429.1">
    <property type="nucleotide sequence ID" value="NC_008577.1"/>
</dbReference>
<dbReference type="SMR" id="A0KY72"/>
<dbReference type="STRING" id="94122.Shewana3_2512"/>
<dbReference type="MEROPS" id="M48.002"/>
<dbReference type="GeneID" id="94728452"/>
<dbReference type="KEGG" id="shn:Shewana3_2512"/>
<dbReference type="eggNOG" id="COG0501">
    <property type="taxonomic scope" value="Bacteria"/>
</dbReference>
<dbReference type="HOGENOM" id="CLU_042266_1_0_6"/>
<dbReference type="OrthoDB" id="15218at2"/>
<dbReference type="Proteomes" id="UP000002589">
    <property type="component" value="Chromosome"/>
</dbReference>
<dbReference type="GO" id="GO:0005886">
    <property type="term" value="C:plasma membrane"/>
    <property type="evidence" value="ECO:0007669"/>
    <property type="project" value="UniProtKB-SubCell"/>
</dbReference>
<dbReference type="GO" id="GO:0004222">
    <property type="term" value="F:metalloendopeptidase activity"/>
    <property type="evidence" value="ECO:0007669"/>
    <property type="project" value="UniProtKB-UniRule"/>
</dbReference>
<dbReference type="GO" id="GO:0008270">
    <property type="term" value="F:zinc ion binding"/>
    <property type="evidence" value="ECO:0007669"/>
    <property type="project" value="UniProtKB-UniRule"/>
</dbReference>
<dbReference type="GO" id="GO:0006508">
    <property type="term" value="P:proteolysis"/>
    <property type="evidence" value="ECO:0007669"/>
    <property type="project" value="UniProtKB-KW"/>
</dbReference>
<dbReference type="CDD" id="cd07335">
    <property type="entry name" value="M48B_HtpX_like"/>
    <property type="match status" value="1"/>
</dbReference>
<dbReference type="FunFam" id="3.30.2010.10:FF:000001">
    <property type="entry name" value="Protease HtpX"/>
    <property type="match status" value="1"/>
</dbReference>
<dbReference type="Gene3D" id="3.30.2010.10">
    <property type="entry name" value="Metalloproteases ('zincins'), catalytic domain"/>
    <property type="match status" value="1"/>
</dbReference>
<dbReference type="HAMAP" id="MF_00188">
    <property type="entry name" value="Pept_M48_protease_HtpX"/>
    <property type="match status" value="1"/>
</dbReference>
<dbReference type="InterPro" id="IPR050083">
    <property type="entry name" value="HtpX_protease"/>
</dbReference>
<dbReference type="InterPro" id="IPR022919">
    <property type="entry name" value="Pept_M48_protease_HtpX"/>
</dbReference>
<dbReference type="InterPro" id="IPR001915">
    <property type="entry name" value="Peptidase_M48"/>
</dbReference>
<dbReference type="NCBIfam" id="NF003965">
    <property type="entry name" value="PRK05457.1"/>
    <property type="match status" value="1"/>
</dbReference>
<dbReference type="PANTHER" id="PTHR43221">
    <property type="entry name" value="PROTEASE HTPX"/>
    <property type="match status" value="1"/>
</dbReference>
<dbReference type="PANTHER" id="PTHR43221:SF1">
    <property type="entry name" value="PROTEASE HTPX"/>
    <property type="match status" value="1"/>
</dbReference>
<dbReference type="Pfam" id="PF01435">
    <property type="entry name" value="Peptidase_M48"/>
    <property type="match status" value="1"/>
</dbReference>
<protein>
    <recommendedName>
        <fullName evidence="1">Protease HtpX</fullName>
        <ecNumber evidence="1">3.4.24.-</ecNumber>
    </recommendedName>
    <alternativeName>
        <fullName evidence="1">Heat shock protein HtpX</fullName>
    </alternativeName>
</protein>
<sequence>MKRIFLLIATNLAVLLVASIVMSILGVNTSTMGGLLVFAAIFGFGGAFISLAISKWMAKKTMGCEVITTPRDSTERWLLDTVARQAQQAGIKMPEVAIYQSPEMNAFATGPSKDNSLVAVSTGLLYGMSQDEVEGVLAHEVSHVANGDMVTLTLIQGVVNTFVIFAARVVAGIINNFVSSNDEEGEGLGMFAYMAVVFVLDMLFGILASIIVAYFSRIREYRADEGAARLAGKHKMIAALERLRQGPESSAMPAQMSAFGINGKRSMAELMMSHPPLEKRIAALQTR</sequence>
<organism>
    <name type="scientific">Shewanella sp. (strain ANA-3)</name>
    <dbReference type="NCBI Taxonomy" id="94122"/>
    <lineage>
        <taxon>Bacteria</taxon>
        <taxon>Pseudomonadati</taxon>
        <taxon>Pseudomonadota</taxon>
        <taxon>Gammaproteobacteria</taxon>
        <taxon>Alteromonadales</taxon>
        <taxon>Shewanellaceae</taxon>
        <taxon>Shewanella</taxon>
    </lineage>
</organism>
<accession>A0KY72</accession>
<name>HTPX_SHESA</name>
<comment type="cofactor">
    <cofactor evidence="1">
        <name>Zn(2+)</name>
        <dbReference type="ChEBI" id="CHEBI:29105"/>
    </cofactor>
    <text evidence="1">Binds 1 zinc ion per subunit.</text>
</comment>
<comment type="subcellular location">
    <subcellularLocation>
        <location evidence="1">Cell inner membrane</location>
        <topology evidence="1">Multi-pass membrane protein</topology>
    </subcellularLocation>
</comment>
<comment type="similarity">
    <text evidence="1">Belongs to the peptidase M48B family.</text>
</comment>
<keyword id="KW-0997">Cell inner membrane</keyword>
<keyword id="KW-1003">Cell membrane</keyword>
<keyword id="KW-0378">Hydrolase</keyword>
<keyword id="KW-0472">Membrane</keyword>
<keyword id="KW-0479">Metal-binding</keyword>
<keyword id="KW-0482">Metalloprotease</keyword>
<keyword id="KW-0645">Protease</keyword>
<keyword id="KW-0812">Transmembrane</keyword>
<keyword id="KW-1133">Transmembrane helix</keyword>
<keyword id="KW-0862">Zinc</keyword>
<gene>
    <name evidence="1" type="primary">htpX</name>
    <name type="ordered locus">Shewana3_2512</name>
</gene>
<proteinExistence type="inferred from homology"/>
<reference key="1">
    <citation type="submission" date="2006-09" db="EMBL/GenBank/DDBJ databases">
        <title>Complete sequence of chromosome 1 of Shewanella sp. ANA-3.</title>
        <authorList>
            <person name="Copeland A."/>
            <person name="Lucas S."/>
            <person name="Lapidus A."/>
            <person name="Barry K."/>
            <person name="Detter J.C."/>
            <person name="Glavina del Rio T."/>
            <person name="Hammon N."/>
            <person name="Israni S."/>
            <person name="Dalin E."/>
            <person name="Tice H."/>
            <person name="Pitluck S."/>
            <person name="Chertkov O."/>
            <person name="Brettin T."/>
            <person name="Bruce D."/>
            <person name="Han C."/>
            <person name="Tapia R."/>
            <person name="Gilna P."/>
            <person name="Schmutz J."/>
            <person name="Larimer F."/>
            <person name="Land M."/>
            <person name="Hauser L."/>
            <person name="Kyrpides N."/>
            <person name="Kim E."/>
            <person name="Newman D."/>
            <person name="Salticov C."/>
            <person name="Konstantinidis K."/>
            <person name="Klappenback J."/>
            <person name="Tiedje J."/>
            <person name="Richardson P."/>
        </authorList>
    </citation>
    <scope>NUCLEOTIDE SEQUENCE [LARGE SCALE GENOMIC DNA]</scope>
    <source>
        <strain>ANA-3</strain>
    </source>
</reference>